<comment type="catalytic activity">
    <reaction evidence="1">
        <text>D-altronate + NAD(+) = keto-D-tagaturonate + NADH + H(+)</text>
        <dbReference type="Rhea" id="RHEA:17813"/>
        <dbReference type="ChEBI" id="CHEBI:15378"/>
        <dbReference type="ChEBI" id="CHEBI:17360"/>
        <dbReference type="ChEBI" id="CHEBI:17886"/>
        <dbReference type="ChEBI" id="CHEBI:57540"/>
        <dbReference type="ChEBI" id="CHEBI:57945"/>
        <dbReference type="EC" id="1.1.1.58"/>
    </reaction>
</comment>
<comment type="pathway">
    <text evidence="1">Carbohydrate metabolism; pentose and glucuronate interconversion.</text>
</comment>
<comment type="similarity">
    <text evidence="1">Belongs to the mannitol dehydrogenase family. UxaB subfamily.</text>
</comment>
<reference key="1">
    <citation type="journal article" date="2008" name="DNA Res.">
        <title>Complete genome sequence and comparative analysis of the wild-type commensal Escherichia coli strain SE11 isolated from a healthy adult.</title>
        <authorList>
            <person name="Oshima K."/>
            <person name="Toh H."/>
            <person name="Ogura Y."/>
            <person name="Sasamoto H."/>
            <person name="Morita H."/>
            <person name="Park S.-H."/>
            <person name="Ooka T."/>
            <person name="Iyoda S."/>
            <person name="Taylor T.D."/>
            <person name="Hayashi T."/>
            <person name="Itoh K."/>
            <person name="Hattori M."/>
        </authorList>
    </citation>
    <scope>NUCLEOTIDE SEQUENCE [LARGE SCALE GENOMIC DNA]</scope>
    <source>
        <strain>SE11</strain>
    </source>
</reference>
<dbReference type="EC" id="1.1.1.58" evidence="1"/>
<dbReference type="EMBL" id="AP009240">
    <property type="protein sequence ID" value="BAG77135.1"/>
    <property type="molecule type" value="Genomic_DNA"/>
</dbReference>
<dbReference type="RefSeq" id="WP_000854624.1">
    <property type="nucleotide sequence ID" value="NC_011415.1"/>
</dbReference>
<dbReference type="SMR" id="B6IAS4"/>
<dbReference type="GeneID" id="75202151"/>
<dbReference type="KEGG" id="ecy:ECSE_1611"/>
<dbReference type="HOGENOM" id="CLU_027324_1_0_6"/>
<dbReference type="UniPathway" id="UPA00246"/>
<dbReference type="Proteomes" id="UP000008199">
    <property type="component" value="Chromosome"/>
</dbReference>
<dbReference type="GO" id="GO:0005829">
    <property type="term" value="C:cytosol"/>
    <property type="evidence" value="ECO:0007669"/>
    <property type="project" value="TreeGrafter"/>
</dbReference>
<dbReference type="GO" id="GO:0008926">
    <property type="term" value="F:mannitol-1-phosphate 5-dehydrogenase activity"/>
    <property type="evidence" value="ECO:0007669"/>
    <property type="project" value="TreeGrafter"/>
</dbReference>
<dbReference type="GO" id="GO:0009026">
    <property type="term" value="F:tagaturonate reductase activity"/>
    <property type="evidence" value="ECO:0007669"/>
    <property type="project" value="UniProtKB-UniRule"/>
</dbReference>
<dbReference type="GO" id="GO:0019698">
    <property type="term" value="P:D-galacturonate catabolic process"/>
    <property type="evidence" value="ECO:0007669"/>
    <property type="project" value="TreeGrafter"/>
</dbReference>
<dbReference type="GO" id="GO:0019592">
    <property type="term" value="P:mannitol catabolic process"/>
    <property type="evidence" value="ECO:0007669"/>
    <property type="project" value="TreeGrafter"/>
</dbReference>
<dbReference type="FunFam" id="1.10.1040.10:FF:000018">
    <property type="entry name" value="Altronate oxidoreductase"/>
    <property type="match status" value="1"/>
</dbReference>
<dbReference type="FunFam" id="3.40.50.720:FF:000153">
    <property type="entry name" value="Altronate oxidoreductase"/>
    <property type="match status" value="1"/>
</dbReference>
<dbReference type="Gene3D" id="1.10.1040.10">
    <property type="entry name" value="N-(1-d-carboxylethyl)-l-norvaline Dehydrogenase, domain 2"/>
    <property type="match status" value="1"/>
</dbReference>
<dbReference type="Gene3D" id="3.40.50.720">
    <property type="entry name" value="NAD(P)-binding Rossmann-like Domain"/>
    <property type="match status" value="1"/>
</dbReference>
<dbReference type="HAMAP" id="MF_00670">
    <property type="entry name" value="Altron_oxidoreduct"/>
    <property type="match status" value="1"/>
</dbReference>
<dbReference type="InterPro" id="IPR008927">
    <property type="entry name" value="6-PGluconate_DH-like_C_sf"/>
</dbReference>
<dbReference type="InterPro" id="IPR013328">
    <property type="entry name" value="6PGD_dom2"/>
</dbReference>
<dbReference type="InterPro" id="IPR023668">
    <property type="entry name" value="Altronate_OxRdtase"/>
</dbReference>
<dbReference type="InterPro" id="IPR013118">
    <property type="entry name" value="Mannitol_DH_C"/>
</dbReference>
<dbReference type="InterPro" id="IPR013131">
    <property type="entry name" value="Mannitol_DH_N"/>
</dbReference>
<dbReference type="InterPro" id="IPR036291">
    <property type="entry name" value="NAD(P)-bd_dom_sf"/>
</dbReference>
<dbReference type="NCBIfam" id="NF002969">
    <property type="entry name" value="PRK03643.1"/>
    <property type="match status" value="1"/>
</dbReference>
<dbReference type="PANTHER" id="PTHR30524:SF0">
    <property type="entry name" value="ALTRONATE OXIDOREDUCTASE-RELATED"/>
    <property type="match status" value="1"/>
</dbReference>
<dbReference type="PANTHER" id="PTHR30524">
    <property type="entry name" value="MANNITOL-1-PHOSPHATE 5-DEHYDROGENASE"/>
    <property type="match status" value="1"/>
</dbReference>
<dbReference type="Pfam" id="PF01232">
    <property type="entry name" value="Mannitol_dh"/>
    <property type="match status" value="1"/>
</dbReference>
<dbReference type="Pfam" id="PF08125">
    <property type="entry name" value="Mannitol_dh_C"/>
    <property type="match status" value="1"/>
</dbReference>
<dbReference type="SUPFAM" id="SSF48179">
    <property type="entry name" value="6-phosphogluconate dehydrogenase C-terminal domain-like"/>
    <property type="match status" value="1"/>
</dbReference>
<dbReference type="SUPFAM" id="SSF51735">
    <property type="entry name" value="NAD(P)-binding Rossmann-fold domains"/>
    <property type="match status" value="1"/>
</dbReference>
<protein>
    <recommendedName>
        <fullName evidence="1">Altronate oxidoreductase</fullName>
        <ecNumber evidence="1">1.1.1.58</ecNumber>
    </recommendedName>
    <alternativeName>
        <fullName evidence="1">Tagaturonate dehydrogenase</fullName>
    </alternativeName>
    <alternativeName>
        <fullName evidence="1">Tagaturonate reductase</fullName>
    </alternativeName>
</protein>
<feature type="chain" id="PRO_1000131511" description="Altronate oxidoreductase">
    <location>
        <begin position="1"/>
        <end position="483"/>
    </location>
</feature>
<feature type="binding site" evidence="1">
    <location>
        <begin position="18"/>
        <end position="29"/>
    </location>
    <ligand>
        <name>NAD(+)</name>
        <dbReference type="ChEBI" id="CHEBI:57540"/>
    </ligand>
</feature>
<proteinExistence type="inferred from homology"/>
<accession>B6IAS4</accession>
<name>UXAB_ECOSE</name>
<keyword id="KW-0520">NAD</keyword>
<keyword id="KW-0560">Oxidoreductase</keyword>
<sequence length="483" mass="54822">MKTLNRRDFPGAQYPERIIQFGEGNFLRAFVDWQIDLLNEHTDLNSGVVVVRPIETSFPPSLSTQDGLYTTIIRGLNEKGEAVSDARLIRSVNREISVYSEYDEFLKLAHNPEMRFVFSNTTEAGISYHAGDKFDDAPAVSYPAKLTRLLFERFSHFNGALDKGWIIIPCELIDYNGDALRELVLRYAQEWALPEAFIQWLDQANSFCSTLVDRIVTGYPRDEVAKLEEELGYHDGFLDTAEHFYLFVIQGPKSLATELRLDKYPLNVLIVDDIKPYKERKVAILNGAHTALVPVAFQAGLDTVGEAMNDAEICAFVEKAIYEEIIPVLDLPRDELESFASAVTGRFRNPYIKHQLLSIALNGMTKFRTRILPQLLAGQKAKGTLPARLTFALAALIAFYRGERNGETYPVQDDAHWLERYQQLWSQHRDRVIGTQELVAIVLAEKDHWEQDLTQVPGLVEQVANDLDAILEKGMREAVRPLC</sequence>
<organism>
    <name type="scientific">Escherichia coli (strain SE11)</name>
    <dbReference type="NCBI Taxonomy" id="409438"/>
    <lineage>
        <taxon>Bacteria</taxon>
        <taxon>Pseudomonadati</taxon>
        <taxon>Pseudomonadota</taxon>
        <taxon>Gammaproteobacteria</taxon>
        <taxon>Enterobacterales</taxon>
        <taxon>Enterobacteriaceae</taxon>
        <taxon>Escherichia</taxon>
    </lineage>
</organism>
<evidence type="ECO:0000255" key="1">
    <source>
        <dbReference type="HAMAP-Rule" id="MF_00670"/>
    </source>
</evidence>
<gene>
    <name evidence="1" type="primary">uxaB</name>
    <name type="ordered locus">ECSE_1611</name>
</gene>